<sequence>MNNRVHQGHLARKRFGQNFLNDQFVIDSIVSAINPQKGQAMVEIGPGLAALTEPVGERLDQLTVIELDRDLAARLQTHPFLGPKLTIYQQDAMTMDFGELSQKMGQPLRVFGNLPYNISTPLMFHLFSYTDAIADMHFMLQKEVVNRLVAGPNSKAYGRLSVMAQYFCQVIPVLEVPPTAFTPPPKVDSAVVRLVPHATPPHPVKELRLLSRLTTEAFNQRRKTIRNSLGNVFSPEVLTSLGIDPAMRAENISVAQYCQMANYLADNPPSKES</sequence>
<accession>A7MIA7</accession>
<feature type="chain" id="PRO_1000056615" description="Ribosomal RNA small subunit methyltransferase A">
    <location>
        <begin position="1"/>
        <end position="273"/>
    </location>
</feature>
<feature type="binding site" evidence="1">
    <location>
        <position position="18"/>
    </location>
    <ligand>
        <name>S-adenosyl-L-methionine</name>
        <dbReference type="ChEBI" id="CHEBI:59789"/>
    </ligand>
</feature>
<feature type="binding site" evidence="1">
    <location>
        <position position="20"/>
    </location>
    <ligand>
        <name>S-adenosyl-L-methionine</name>
        <dbReference type="ChEBI" id="CHEBI:59789"/>
    </ligand>
</feature>
<feature type="binding site" evidence="1">
    <location>
        <position position="45"/>
    </location>
    <ligand>
        <name>S-adenosyl-L-methionine</name>
        <dbReference type="ChEBI" id="CHEBI:59789"/>
    </ligand>
</feature>
<feature type="binding site" evidence="1">
    <location>
        <position position="66"/>
    </location>
    <ligand>
        <name>S-adenosyl-L-methionine</name>
        <dbReference type="ChEBI" id="CHEBI:59789"/>
    </ligand>
</feature>
<feature type="binding site" evidence="1">
    <location>
        <position position="91"/>
    </location>
    <ligand>
        <name>S-adenosyl-L-methionine</name>
        <dbReference type="ChEBI" id="CHEBI:59789"/>
    </ligand>
</feature>
<feature type="binding site" evidence="1">
    <location>
        <position position="113"/>
    </location>
    <ligand>
        <name>S-adenosyl-L-methionine</name>
        <dbReference type="ChEBI" id="CHEBI:59789"/>
    </ligand>
</feature>
<name>RSMA_CROS8</name>
<reference key="1">
    <citation type="journal article" date="2010" name="PLoS ONE">
        <title>Genome sequence of Cronobacter sakazakii BAA-894 and comparative genomic hybridization analysis with other Cronobacter species.</title>
        <authorList>
            <person name="Kucerova E."/>
            <person name="Clifton S.W."/>
            <person name="Xia X.Q."/>
            <person name="Long F."/>
            <person name="Porwollik S."/>
            <person name="Fulton L."/>
            <person name="Fronick C."/>
            <person name="Minx P."/>
            <person name="Kyung K."/>
            <person name="Warren W."/>
            <person name="Fulton R."/>
            <person name="Feng D."/>
            <person name="Wollam A."/>
            <person name="Shah N."/>
            <person name="Bhonagiri V."/>
            <person name="Nash W.E."/>
            <person name="Hallsworth-Pepin K."/>
            <person name="Wilson R.K."/>
            <person name="McClelland M."/>
            <person name="Forsythe S.J."/>
        </authorList>
    </citation>
    <scope>NUCLEOTIDE SEQUENCE [LARGE SCALE GENOMIC DNA]</scope>
    <source>
        <strain>ATCC BAA-894</strain>
    </source>
</reference>
<dbReference type="EC" id="2.1.1.182" evidence="1"/>
<dbReference type="EMBL" id="CP000783">
    <property type="protein sequence ID" value="ABU78508.1"/>
    <property type="molecule type" value="Genomic_DNA"/>
</dbReference>
<dbReference type="RefSeq" id="WP_004385580.1">
    <property type="nucleotide sequence ID" value="NC_009778.1"/>
</dbReference>
<dbReference type="SMR" id="A7MIA7"/>
<dbReference type="GeneID" id="56731971"/>
<dbReference type="KEGG" id="esa:ESA_03287"/>
<dbReference type="HOGENOM" id="CLU_041220_0_1_6"/>
<dbReference type="Proteomes" id="UP000000260">
    <property type="component" value="Chromosome"/>
</dbReference>
<dbReference type="GO" id="GO:0005829">
    <property type="term" value="C:cytosol"/>
    <property type="evidence" value="ECO:0007669"/>
    <property type="project" value="TreeGrafter"/>
</dbReference>
<dbReference type="GO" id="GO:0052908">
    <property type="term" value="F:16S rRNA (adenine(1518)-N(6)/adenine(1519)-N(6))-dimethyltransferase activity"/>
    <property type="evidence" value="ECO:0007669"/>
    <property type="project" value="UniProtKB-EC"/>
</dbReference>
<dbReference type="GO" id="GO:0003723">
    <property type="term" value="F:RNA binding"/>
    <property type="evidence" value="ECO:0007669"/>
    <property type="project" value="UniProtKB-KW"/>
</dbReference>
<dbReference type="FunFam" id="1.10.8.100:FF:000001">
    <property type="entry name" value="Ribosomal RNA small subunit methyltransferase A"/>
    <property type="match status" value="1"/>
</dbReference>
<dbReference type="FunFam" id="3.40.50.150:FF:000006">
    <property type="entry name" value="Ribosomal RNA small subunit methyltransferase A"/>
    <property type="match status" value="1"/>
</dbReference>
<dbReference type="Gene3D" id="1.10.8.100">
    <property type="entry name" value="Ribosomal RNA adenine dimethylase-like, domain 2"/>
    <property type="match status" value="1"/>
</dbReference>
<dbReference type="Gene3D" id="3.40.50.150">
    <property type="entry name" value="Vaccinia Virus protein VP39"/>
    <property type="match status" value="1"/>
</dbReference>
<dbReference type="HAMAP" id="MF_00607">
    <property type="entry name" value="16SrRNA_methyltr_A"/>
    <property type="match status" value="1"/>
</dbReference>
<dbReference type="InterPro" id="IPR001737">
    <property type="entry name" value="KsgA/Erm"/>
</dbReference>
<dbReference type="InterPro" id="IPR023165">
    <property type="entry name" value="rRNA_Ade_diMease-like_C"/>
</dbReference>
<dbReference type="InterPro" id="IPR020596">
    <property type="entry name" value="rRNA_Ade_Mease_Trfase_CS"/>
</dbReference>
<dbReference type="InterPro" id="IPR020598">
    <property type="entry name" value="rRNA_Ade_methylase_Trfase_N"/>
</dbReference>
<dbReference type="InterPro" id="IPR011530">
    <property type="entry name" value="rRNA_adenine_dimethylase"/>
</dbReference>
<dbReference type="InterPro" id="IPR029063">
    <property type="entry name" value="SAM-dependent_MTases_sf"/>
</dbReference>
<dbReference type="NCBIfam" id="TIGR00755">
    <property type="entry name" value="ksgA"/>
    <property type="match status" value="1"/>
</dbReference>
<dbReference type="PANTHER" id="PTHR11727">
    <property type="entry name" value="DIMETHYLADENOSINE TRANSFERASE"/>
    <property type="match status" value="1"/>
</dbReference>
<dbReference type="PANTHER" id="PTHR11727:SF7">
    <property type="entry name" value="DIMETHYLADENOSINE TRANSFERASE-RELATED"/>
    <property type="match status" value="1"/>
</dbReference>
<dbReference type="Pfam" id="PF00398">
    <property type="entry name" value="RrnaAD"/>
    <property type="match status" value="1"/>
</dbReference>
<dbReference type="SMART" id="SM00650">
    <property type="entry name" value="rADc"/>
    <property type="match status" value="1"/>
</dbReference>
<dbReference type="SUPFAM" id="SSF53335">
    <property type="entry name" value="S-adenosyl-L-methionine-dependent methyltransferases"/>
    <property type="match status" value="1"/>
</dbReference>
<dbReference type="PROSITE" id="PS01131">
    <property type="entry name" value="RRNA_A_DIMETH"/>
    <property type="match status" value="1"/>
</dbReference>
<dbReference type="PROSITE" id="PS51689">
    <property type="entry name" value="SAM_RNA_A_N6_MT"/>
    <property type="match status" value="1"/>
</dbReference>
<protein>
    <recommendedName>
        <fullName evidence="1">Ribosomal RNA small subunit methyltransferase A</fullName>
        <ecNumber evidence="1">2.1.1.182</ecNumber>
    </recommendedName>
    <alternativeName>
        <fullName evidence="1">16S rRNA (adenine(1518)-N(6)/adenine(1519)-N(6))-dimethyltransferase</fullName>
    </alternativeName>
    <alternativeName>
        <fullName evidence="1">16S rRNA dimethyladenosine transferase</fullName>
    </alternativeName>
    <alternativeName>
        <fullName evidence="1">16S rRNA dimethylase</fullName>
    </alternativeName>
    <alternativeName>
        <fullName evidence="1">S-adenosylmethionine-6-N', N'-adenosyl(rRNA) dimethyltransferase</fullName>
    </alternativeName>
</protein>
<proteinExistence type="inferred from homology"/>
<comment type="function">
    <text evidence="1">Specifically dimethylates two adjacent adenosines (A1518 and A1519) in the loop of a conserved hairpin near the 3'-end of 16S rRNA in the 30S particle. May play a critical role in biogenesis of 30S subunits.</text>
</comment>
<comment type="catalytic activity">
    <reaction evidence="1">
        <text>adenosine(1518)/adenosine(1519) in 16S rRNA + 4 S-adenosyl-L-methionine = N(6)-dimethyladenosine(1518)/N(6)-dimethyladenosine(1519) in 16S rRNA + 4 S-adenosyl-L-homocysteine + 4 H(+)</text>
        <dbReference type="Rhea" id="RHEA:19609"/>
        <dbReference type="Rhea" id="RHEA-COMP:10232"/>
        <dbReference type="Rhea" id="RHEA-COMP:10233"/>
        <dbReference type="ChEBI" id="CHEBI:15378"/>
        <dbReference type="ChEBI" id="CHEBI:57856"/>
        <dbReference type="ChEBI" id="CHEBI:59789"/>
        <dbReference type="ChEBI" id="CHEBI:74411"/>
        <dbReference type="ChEBI" id="CHEBI:74493"/>
        <dbReference type="EC" id="2.1.1.182"/>
    </reaction>
</comment>
<comment type="subcellular location">
    <subcellularLocation>
        <location evidence="1">Cytoplasm</location>
    </subcellularLocation>
</comment>
<comment type="similarity">
    <text evidence="1">Belongs to the class I-like SAM-binding methyltransferase superfamily. rRNA adenine N(6)-methyltransferase family. RsmA subfamily.</text>
</comment>
<organism>
    <name type="scientific">Cronobacter sakazakii (strain ATCC BAA-894)</name>
    <name type="common">Enterobacter sakazakii</name>
    <dbReference type="NCBI Taxonomy" id="290339"/>
    <lineage>
        <taxon>Bacteria</taxon>
        <taxon>Pseudomonadati</taxon>
        <taxon>Pseudomonadota</taxon>
        <taxon>Gammaproteobacteria</taxon>
        <taxon>Enterobacterales</taxon>
        <taxon>Enterobacteriaceae</taxon>
        <taxon>Cronobacter</taxon>
    </lineage>
</organism>
<gene>
    <name evidence="1" type="primary">rsmA</name>
    <name evidence="1" type="synonym">ksgA</name>
    <name type="ordered locus">ESA_03287</name>
</gene>
<evidence type="ECO:0000255" key="1">
    <source>
        <dbReference type="HAMAP-Rule" id="MF_00607"/>
    </source>
</evidence>
<keyword id="KW-0963">Cytoplasm</keyword>
<keyword id="KW-0489">Methyltransferase</keyword>
<keyword id="KW-1185">Reference proteome</keyword>
<keyword id="KW-0694">RNA-binding</keyword>
<keyword id="KW-0698">rRNA processing</keyword>
<keyword id="KW-0949">S-adenosyl-L-methionine</keyword>
<keyword id="KW-0808">Transferase</keyword>